<keyword id="KW-0997">Cell inner membrane</keyword>
<keyword id="KW-1003">Cell membrane</keyword>
<keyword id="KW-0472">Membrane</keyword>
<keyword id="KW-0812">Transmembrane</keyword>
<keyword id="KW-1133">Transmembrane helix</keyword>
<feature type="chain" id="PRO_0000282247" description="UPF0060 membrane protein Pfl01_4105">
    <location>
        <begin position="1"/>
        <end position="110"/>
    </location>
</feature>
<feature type="transmembrane region" description="Helical" evidence="1">
    <location>
        <begin position="5"/>
        <end position="25"/>
    </location>
</feature>
<feature type="transmembrane region" description="Helical" evidence="1">
    <location>
        <begin position="28"/>
        <end position="48"/>
    </location>
</feature>
<feature type="transmembrane region" description="Helical" evidence="1">
    <location>
        <begin position="59"/>
        <end position="79"/>
    </location>
</feature>
<feature type="transmembrane region" description="Helical" evidence="1">
    <location>
        <begin position="84"/>
        <end position="104"/>
    </location>
</feature>
<evidence type="ECO:0000255" key="1">
    <source>
        <dbReference type="HAMAP-Rule" id="MF_00010"/>
    </source>
</evidence>
<evidence type="ECO:0000305" key="2"/>
<protein>
    <recommendedName>
        <fullName evidence="1">UPF0060 membrane protein Pfl01_4105</fullName>
    </recommendedName>
</protein>
<gene>
    <name type="ordered locus">Pfl01_4105</name>
</gene>
<organism>
    <name type="scientific">Pseudomonas fluorescens (strain Pf0-1)</name>
    <dbReference type="NCBI Taxonomy" id="205922"/>
    <lineage>
        <taxon>Bacteria</taxon>
        <taxon>Pseudomonadati</taxon>
        <taxon>Pseudomonadota</taxon>
        <taxon>Gammaproteobacteria</taxon>
        <taxon>Pseudomonadales</taxon>
        <taxon>Pseudomonadaceae</taxon>
        <taxon>Pseudomonas</taxon>
    </lineage>
</organism>
<dbReference type="EMBL" id="CP000094">
    <property type="protein sequence ID" value="ABA75842.1"/>
    <property type="status" value="ALT_INIT"/>
    <property type="molecule type" value="Genomic_DNA"/>
</dbReference>
<dbReference type="RefSeq" id="WP_041475391.1">
    <property type="nucleotide sequence ID" value="NC_007492.2"/>
</dbReference>
<dbReference type="SMR" id="Q3K8R2"/>
<dbReference type="KEGG" id="pfo:Pfl01_4105"/>
<dbReference type="eggNOG" id="COG1742">
    <property type="taxonomic scope" value="Bacteria"/>
</dbReference>
<dbReference type="HOGENOM" id="CLU_117653_2_0_6"/>
<dbReference type="Proteomes" id="UP000002704">
    <property type="component" value="Chromosome"/>
</dbReference>
<dbReference type="GO" id="GO:0005886">
    <property type="term" value="C:plasma membrane"/>
    <property type="evidence" value="ECO:0007669"/>
    <property type="project" value="UniProtKB-SubCell"/>
</dbReference>
<dbReference type="HAMAP" id="MF_00010">
    <property type="entry name" value="UPF0060"/>
    <property type="match status" value="1"/>
</dbReference>
<dbReference type="InterPro" id="IPR003844">
    <property type="entry name" value="UPF0060"/>
</dbReference>
<dbReference type="NCBIfam" id="NF002586">
    <property type="entry name" value="PRK02237.1"/>
    <property type="match status" value="1"/>
</dbReference>
<dbReference type="PANTHER" id="PTHR36116">
    <property type="entry name" value="UPF0060 MEMBRANE PROTEIN YNFA"/>
    <property type="match status" value="1"/>
</dbReference>
<dbReference type="PANTHER" id="PTHR36116:SF1">
    <property type="entry name" value="UPF0060 MEMBRANE PROTEIN YNFA"/>
    <property type="match status" value="1"/>
</dbReference>
<dbReference type="Pfam" id="PF02694">
    <property type="entry name" value="UPF0060"/>
    <property type="match status" value="1"/>
</dbReference>
<dbReference type="SUPFAM" id="SSF103481">
    <property type="entry name" value="Multidrug resistance efflux transporter EmrE"/>
    <property type="match status" value="1"/>
</dbReference>
<accession>Q3K8R2</accession>
<name>Y4105_PSEPF</name>
<proteinExistence type="inferred from homology"/>
<reference key="1">
    <citation type="journal article" date="2009" name="Genome Biol.">
        <title>Genomic and genetic analyses of diversity and plant interactions of Pseudomonas fluorescens.</title>
        <authorList>
            <person name="Silby M.W."/>
            <person name="Cerdeno-Tarraga A.M."/>
            <person name="Vernikos G.S."/>
            <person name="Giddens S.R."/>
            <person name="Jackson R.W."/>
            <person name="Preston G.M."/>
            <person name="Zhang X.-X."/>
            <person name="Moon C.D."/>
            <person name="Gehrig S.M."/>
            <person name="Godfrey S.A.C."/>
            <person name="Knight C.G."/>
            <person name="Malone J.G."/>
            <person name="Robinson Z."/>
            <person name="Spiers A.J."/>
            <person name="Harris S."/>
            <person name="Challis G.L."/>
            <person name="Yaxley A.M."/>
            <person name="Harris D."/>
            <person name="Seeger K."/>
            <person name="Murphy L."/>
            <person name="Rutter S."/>
            <person name="Squares R."/>
            <person name="Quail M.A."/>
            <person name="Saunders E."/>
            <person name="Mavromatis K."/>
            <person name="Brettin T.S."/>
            <person name="Bentley S.D."/>
            <person name="Hothersall J."/>
            <person name="Stephens E."/>
            <person name="Thomas C.M."/>
            <person name="Parkhill J."/>
            <person name="Levy S.B."/>
            <person name="Rainey P.B."/>
            <person name="Thomson N.R."/>
        </authorList>
    </citation>
    <scope>NUCLEOTIDE SEQUENCE [LARGE SCALE GENOMIC DNA]</scope>
    <source>
        <strain>Pf0-1</strain>
    </source>
</reference>
<sequence>MLNYLWFFLAALFEIAGCFAFWMWLRQGKSALWVIPALISLTLFALLLTRVEATYAGRAYAAYGGIYIIASIGWLAVVERIRPLGSDWIGVALCVIGATVILFGPRFSAS</sequence>
<comment type="subcellular location">
    <subcellularLocation>
        <location evidence="1">Cell inner membrane</location>
        <topology evidence="1">Multi-pass membrane protein</topology>
    </subcellularLocation>
</comment>
<comment type="similarity">
    <text evidence="1">Belongs to the UPF0060 family.</text>
</comment>
<comment type="sequence caution" evidence="2">
    <conflict type="erroneous initiation">
        <sequence resource="EMBL-CDS" id="ABA75842"/>
    </conflict>
</comment>